<gene>
    <name type="primary">Bola2</name>
</gene>
<sequence length="86" mass="10215">MELSADYLREKLRQDLEAEHVEVEDTTLNRCATSFRVLVVSAKFEGKPLLQRHRLVNECLAEELPHIHAFEQKTLTPEQWTRQRRE</sequence>
<dbReference type="EMBL" id="AK002662">
    <property type="protein sequence ID" value="BAC25001.1"/>
    <property type="molecule type" value="mRNA"/>
</dbReference>
<dbReference type="EMBL" id="AK003922">
    <property type="protein sequence ID" value="BAC25060.1"/>
    <property type="molecule type" value="mRNA"/>
</dbReference>
<dbReference type="EMBL" id="CH466531">
    <property type="protein sequence ID" value="EDL17416.1"/>
    <property type="molecule type" value="Genomic_DNA"/>
</dbReference>
<dbReference type="EMBL" id="BC045523">
    <property type="protein sequence ID" value="AAH45523.1"/>
    <property type="molecule type" value="mRNA"/>
</dbReference>
<dbReference type="EMBL" id="BC061197">
    <property type="protein sequence ID" value="AAH61197.1"/>
    <property type="molecule type" value="mRNA"/>
</dbReference>
<dbReference type="CCDS" id="CCDS40129.1">
    <molecule id="Q8BGS2-1"/>
</dbReference>
<dbReference type="RefSeq" id="NP_780312.1">
    <molecule id="Q8BGS2-1"/>
    <property type="nucleotide sequence ID" value="NM_175103.3"/>
</dbReference>
<dbReference type="PDB" id="1V9J">
    <property type="method" value="NMR"/>
    <property type="chains" value="A=1-86"/>
</dbReference>
<dbReference type="PDBsum" id="1V9J"/>
<dbReference type="SMR" id="Q8BGS2"/>
<dbReference type="BioGRID" id="211260">
    <property type="interactions" value="9"/>
</dbReference>
<dbReference type="FunCoup" id="Q8BGS2">
    <property type="interactions" value="969"/>
</dbReference>
<dbReference type="STRING" id="10090.ENSMUSP00000114873"/>
<dbReference type="PhosphoSitePlus" id="Q8BGS2"/>
<dbReference type="jPOST" id="Q8BGS2"/>
<dbReference type="PaxDb" id="10090-ENSMUSP00000114873"/>
<dbReference type="PeptideAtlas" id="Q8BGS2"/>
<dbReference type="ProteomicsDB" id="273757">
    <molecule id="Q8BGS2-1"/>
</dbReference>
<dbReference type="ProteomicsDB" id="273758">
    <molecule id="Q8BGS2-2"/>
</dbReference>
<dbReference type="Pumba" id="Q8BGS2"/>
<dbReference type="Ensembl" id="ENSMUST00000106369.2">
    <molecule id="Q8BGS2-2"/>
    <property type="protein sequence ID" value="ENSMUSP00000101977.2"/>
    <property type="gene ID" value="ENSMUSG00000047721.9"/>
</dbReference>
<dbReference type="Ensembl" id="ENSMUST00000130498.2">
    <molecule id="Q8BGS2-1"/>
    <property type="protein sequence ID" value="ENSMUSP00000114873.2"/>
    <property type="gene ID" value="ENSMUSG00000047721.9"/>
</dbReference>
<dbReference type="GeneID" id="66162"/>
<dbReference type="KEGG" id="mmu:66162"/>
<dbReference type="UCSC" id="uc009jsj.1">
    <molecule id="Q8BGS2-1"/>
    <property type="organism name" value="mouse"/>
</dbReference>
<dbReference type="AGR" id="MGI:1913412"/>
<dbReference type="CTD" id="552900"/>
<dbReference type="MGI" id="MGI:1913412">
    <property type="gene designation" value="Bola2"/>
</dbReference>
<dbReference type="VEuPathDB" id="HostDB:ENSMUSG00000047721"/>
<dbReference type="eggNOG" id="KOG3348">
    <property type="taxonomic scope" value="Eukaryota"/>
</dbReference>
<dbReference type="GeneTree" id="ENSGT00510000047760"/>
<dbReference type="HOGENOM" id="CLU_109462_4_0_1"/>
<dbReference type="InParanoid" id="Q8BGS2"/>
<dbReference type="OMA" id="VHAFSQK"/>
<dbReference type="OrthoDB" id="92177at9989"/>
<dbReference type="PhylomeDB" id="Q8BGS2"/>
<dbReference type="TreeFam" id="TF313141"/>
<dbReference type="BioGRID-ORCS" id="66162">
    <property type="hits" value="1 hit in 79 CRISPR screens"/>
</dbReference>
<dbReference type="ChiTaRS" id="Bola2">
    <property type="organism name" value="mouse"/>
</dbReference>
<dbReference type="EvolutionaryTrace" id="Q8BGS2"/>
<dbReference type="PRO" id="PR:Q8BGS2"/>
<dbReference type="Proteomes" id="UP000000589">
    <property type="component" value="Chromosome 7"/>
</dbReference>
<dbReference type="RNAct" id="Q8BGS2">
    <property type="molecule type" value="protein"/>
</dbReference>
<dbReference type="Bgee" id="ENSMUSG00000047721">
    <property type="expression patterns" value="Expressed in embryonic brain and 264 other cell types or tissues"/>
</dbReference>
<dbReference type="GO" id="GO:0005737">
    <property type="term" value="C:cytoplasm"/>
    <property type="evidence" value="ECO:0000250"/>
    <property type="project" value="UniProtKB"/>
</dbReference>
<dbReference type="GO" id="GO:0005634">
    <property type="term" value="C:nucleus"/>
    <property type="evidence" value="ECO:0000250"/>
    <property type="project" value="UniProtKB"/>
</dbReference>
<dbReference type="GO" id="GO:0051537">
    <property type="term" value="F:2 iron, 2 sulfur cluster binding"/>
    <property type="evidence" value="ECO:0007669"/>
    <property type="project" value="InterPro"/>
</dbReference>
<dbReference type="GO" id="GO:0044571">
    <property type="term" value="P:[2Fe-2S] cluster assembly"/>
    <property type="evidence" value="ECO:0000250"/>
    <property type="project" value="UniProtKB"/>
</dbReference>
<dbReference type="GO" id="GO:0006879">
    <property type="term" value="P:intracellular iron ion homeostasis"/>
    <property type="evidence" value="ECO:0007669"/>
    <property type="project" value="InterPro"/>
</dbReference>
<dbReference type="GO" id="GO:0051604">
    <property type="term" value="P:protein maturation"/>
    <property type="evidence" value="ECO:0007669"/>
    <property type="project" value="InterPro"/>
</dbReference>
<dbReference type="FunFam" id="3.10.20.90:FF:000308">
    <property type="entry name" value="bolA-like protein 2"/>
    <property type="match status" value="1"/>
</dbReference>
<dbReference type="Gene3D" id="3.10.20.90">
    <property type="entry name" value="Phosphatidylinositol 3-kinase Catalytic Subunit, Chain A, domain 1"/>
    <property type="match status" value="1"/>
</dbReference>
<dbReference type="InterPro" id="IPR045115">
    <property type="entry name" value="BOL2"/>
</dbReference>
<dbReference type="InterPro" id="IPR002634">
    <property type="entry name" value="BolA"/>
</dbReference>
<dbReference type="InterPro" id="IPR036065">
    <property type="entry name" value="BolA-like_sf"/>
</dbReference>
<dbReference type="PANTHER" id="PTHR12735:SF27">
    <property type="entry name" value="BOLA-LIKE PROTEIN 2"/>
    <property type="match status" value="1"/>
</dbReference>
<dbReference type="PANTHER" id="PTHR12735">
    <property type="entry name" value="BOLA-LIKE PROTEIN-RELATED"/>
    <property type="match status" value="1"/>
</dbReference>
<dbReference type="Pfam" id="PF01722">
    <property type="entry name" value="BolA"/>
    <property type="match status" value="1"/>
</dbReference>
<dbReference type="PIRSF" id="PIRSF003113">
    <property type="entry name" value="BolA"/>
    <property type="match status" value="1"/>
</dbReference>
<dbReference type="SUPFAM" id="SSF82657">
    <property type="entry name" value="BolA-like"/>
    <property type="match status" value="1"/>
</dbReference>
<reference key="1">
    <citation type="journal article" date="2005" name="Science">
        <title>The transcriptional landscape of the mammalian genome.</title>
        <authorList>
            <person name="Carninci P."/>
            <person name="Kasukawa T."/>
            <person name="Katayama S."/>
            <person name="Gough J."/>
            <person name="Frith M.C."/>
            <person name="Maeda N."/>
            <person name="Oyama R."/>
            <person name="Ravasi T."/>
            <person name="Lenhard B."/>
            <person name="Wells C."/>
            <person name="Kodzius R."/>
            <person name="Shimokawa K."/>
            <person name="Bajic V.B."/>
            <person name="Brenner S.E."/>
            <person name="Batalov S."/>
            <person name="Forrest A.R."/>
            <person name="Zavolan M."/>
            <person name="Davis M.J."/>
            <person name="Wilming L.G."/>
            <person name="Aidinis V."/>
            <person name="Allen J.E."/>
            <person name="Ambesi-Impiombato A."/>
            <person name="Apweiler R."/>
            <person name="Aturaliya R.N."/>
            <person name="Bailey T.L."/>
            <person name="Bansal M."/>
            <person name="Baxter L."/>
            <person name="Beisel K.W."/>
            <person name="Bersano T."/>
            <person name="Bono H."/>
            <person name="Chalk A.M."/>
            <person name="Chiu K.P."/>
            <person name="Choudhary V."/>
            <person name="Christoffels A."/>
            <person name="Clutterbuck D.R."/>
            <person name="Crowe M.L."/>
            <person name="Dalla E."/>
            <person name="Dalrymple B.P."/>
            <person name="de Bono B."/>
            <person name="Della Gatta G."/>
            <person name="di Bernardo D."/>
            <person name="Down T."/>
            <person name="Engstrom P."/>
            <person name="Fagiolini M."/>
            <person name="Faulkner G."/>
            <person name="Fletcher C.F."/>
            <person name="Fukushima T."/>
            <person name="Furuno M."/>
            <person name="Futaki S."/>
            <person name="Gariboldi M."/>
            <person name="Georgii-Hemming P."/>
            <person name="Gingeras T.R."/>
            <person name="Gojobori T."/>
            <person name="Green R.E."/>
            <person name="Gustincich S."/>
            <person name="Harbers M."/>
            <person name="Hayashi Y."/>
            <person name="Hensch T.K."/>
            <person name="Hirokawa N."/>
            <person name="Hill D."/>
            <person name="Huminiecki L."/>
            <person name="Iacono M."/>
            <person name="Ikeo K."/>
            <person name="Iwama A."/>
            <person name="Ishikawa T."/>
            <person name="Jakt M."/>
            <person name="Kanapin A."/>
            <person name="Katoh M."/>
            <person name="Kawasawa Y."/>
            <person name="Kelso J."/>
            <person name="Kitamura H."/>
            <person name="Kitano H."/>
            <person name="Kollias G."/>
            <person name="Krishnan S.P."/>
            <person name="Kruger A."/>
            <person name="Kummerfeld S.K."/>
            <person name="Kurochkin I.V."/>
            <person name="Lareau L.F."/>
            <person name="Lazarevic D."/>
            <person name="Lipovich L."/>
            <person name="Liu J."/>
            <person name="Liuni S."/>
            <person name="McWilliam S."/>
            <person name="Madan Babu M."/>
            <person name="Madera M."/>
            <person name="Marchionni L."/>
            <person name="Matsuda H."/>
            <person name="Matsuzawa S."/>
            <person name="Miki H."/>
            <person name="Mignone F."/>
            <person name="Miyake S."/>
            <person name="Morris K."/>
            <person name="Mottagui-Tabar S."/>
            <person name="Mulder N."/>
            <person name="Nakano N."/>
            <person name="Nakauchi H."/>
            <person name="Ng P."/>
            <person name="Nilsson R."/>
            <person name="Nishiguchi S."/>
            <person name="Nishikawa S."/>
            <person name="Nori F."/>
            <person name="Ohara O."/>
            <person name="Okazaki Y."/>
            <person name="Orlando V."/>
            <person name="Pang K.C."/>
            <person name="Pavan W.J."/>
            <person name="Pavesi G."/>
            <person name="Pesole G."/>
            <person name="Petrovsky N."/>
            <person name="Piazza S."/>
            <person name="Reed J."/>
            <person name="Reid J.F."/>
            <person name="Ring B.Z."/>
            <person name="Ringwald M."/>
            <person name="Rost B."/>
            <person name="Ruan Y."/>
            <person name="Salzberg S.L."/>
            <person name="Sandelin A."/>
            <person name="Schneider C."/>
            <person name="Schoenbach C."/>
            <person name="Sekiguchi K."/>
            <person name="Semple C.A."/>
            <person name="Seno S."/>
            <person name="Sessa L."/>
            <person name="Sheng Y."/>
            <person name="Shibata Y."/>
            <person name="Shimada H."/>
            <person name="Shimada K."/>
            <person name="Silva D."/>
            <person name="Sinclair B."/>
            <person name="Sperling S."/>
            <person name="Stupka E."/>
            <person name="Sugiura K."/>
            <person name="Sultana R."/>
            <person name="Takenaka Y."/>
            <person name="Taki K."/>
            <person name="Tammoja K."/>
            <person name="Tan S.L."/>
            <person name="Tang S."/>
            <person name="Taylor M.S."/>
            <person name="Tegner J."/>
            <person name="Teichmann S.A."/>
            <person name="Ueda H.R."/>
            <person name="van Nimwegen E."/>
            <person name="Verardo R."/>
            <person name="Wei C.L."/>
            <person name="Yagi K."/>
            <person name="Yamanishi H."/>
            <person name="Zabarovsky E."/>
            <person name="Zhu S."/>
            <person name="Zimmer A."/>
            <person name="Hide W."/>
            <person name="Bult C."/>
            <person name="Grimmond S.M."/>
            <person name="Teasdale R.D."/>
            <person name="Liu E.T."/>
            <person name="Brusic V."/>
            <person name="Quackenbush J."/>
            <person name="Wahlestedt C."/>
            <person name="Mattick J.S."/>
            <person name="Hume D.A."/>
            <person name="Kai C."/>
            <person name="Sasaki D."/>
            <person name="Tomaru Y."/>
            <person name="Fukuda S."/>
            <person name="Kanamori-Katayama M."/>
            <person name="Suzuki M."/>
            <person name="Aoki J."/>
            <person name="Arakawa T."/>
            <person name="Iida J."/>
            <person name="Imamura K."/>
            <person name="Itoh M."/>
            <person name="Kato T."/>
            <person name="Kawaji H."/>
            <person name="Kawagashira N."/>
            <person name="Kawashima T."/>
            <person name="Kojima M."/>
            <person name="Kondo S."/>
            <person name="Konno H."/>
            <person name="Nakano K."/>
            <person name="Ninomiya N."/>
            <person name="Nishio T."/>
            <person name="Okada M."/>
            <person name="Plessy C."/>
            <person name="Shibata K."/>
            <person name="Shiraki T."/>
            <person name="Suzuki S."/>
            <person name="Tagami M."/>
            <person name="Waki K."/>
            <person name="Watahiki A."/>
            <person name="Okamura-Oho Y."/>
            <person name="Suzuki H."/>
            <person name="Kawai J."/>
            <person name="Hayashizaki Y."/>
        </authorList>
    </citation>
    <scope>NUCLEOTIDE SEQUENCE [LARGE SCALE MRNA] (ISOFORM 1)</scope>
    <source>
        <strain>C57BL/6J</strain>
        <tissue>Kidney</tissue>
    </source>
</reference>
<reference key="2">
    <citation type="submission" date="2005-07" db="EMBL/GenBank/DDBJ databases">
        <authorList>
            <person name="Mural R.J."/>
            <person name="Adams M.D."/>
            <person name="Myers E.W."/>
            <person name="Smith H.O."/>
            <person name="Venter J.C."/>
        </authorList>
    </citation>
    <scope>NUCLEOTIDE SEQUENCE [LARGE SCALE GENOMIC DNA]</scope>
</reference>
<reference key="3">
    <citation type="journal article" date="2004" name="Genome Res.">
        <title>The status, quality, and expansion of the NIH full-length cDNA project: the Mammalian Gene Collection (MGC).</title>
        <authorList>
            <consortium name="The MGC Project Team"/>
        </authorList>
    </citation>
    <scope>NUCLEOTIDE SEQUENCE [LARGE SCALE MRNA] (ISOFORM 2)</scope>
    <source>
        <strain>FVB/N</strain>
        <tissue>Colon</tissue>
        <tissue>Testis</tissue>
    </source>
</reference>
<reference key="4">
    <citation type="journal article" date="2010" name="Cell">
        <title>A tissue-specific atlas of mouse protein phosphorylation and expression.</title>
        <authorList>
            <person name="Huttlin E.L."/>
            <person name="Jedrychowski M.P."/>
            <person name="Elias J.E."/>
            <person name="Goswami T."/>
            <person name="Rad R."/>
            <person name="Beausoleil S.A."/>
            <person name="Villen J."/>
            <person name="Haas W."/>
            <person name="Sowa M.E."/>
            <person name="Gygi S.P."/>
        </authorList>
    </citation>
    <scope>IDENTIFICATION BY MASS SPECTROMETRY [LARGE SCALE ANALYSIS]</scope>
    <source>
        <tissue>Brain</tissue>
        <tissue>Kidney</tissue>
        <tissue>Liver</tissue>
        <tissue>Pancreas</tissue>
        <tissue>Spleen</tissue>
        <tissue>Testis</tissue>
    </source>
</reference>
<reference key="5">
    <citation type="journal article" date="2004" name="Protein Sci.">
        <title>Solution structure of a BolA-like protein from Mus musculus.</title>
        <authorList>
            <person name="Kasai T."/>
            <person name="Inoue M."/>
            <person name="Koshiba S."/>
            <person name="Yabuki T."/>
            <person name="Aoki M."/>
            <person name="Nunokawa E."/>
            <person name="Seki E."/>
            <person name="Matsuda T."/>
            <person name="Matsuda N."/>
            <person name="Tomo Y."/>
            <person name="Shirouzu M."/>
            <person name="Terada T."/>
            <person name="Obayashi N."/>
            <person name="Hamana H."/>
            <person name="Shinya N."/>
            <person name="Tatsuguchi A."/>
            <person name="Yasuda S."/>
            <person name="Yoshida M."/>
            <person name="Hirota H."/>
            <person name="Matsuo Y."/>
            <person name="Tani K."/>
            <person name="Suzuki H."/>
            <person name="Arakawa T."/>
            <person name="Carninci P."/>
            <person name="Kawai J."/>
            <person name="Hayashizaki Y."/>
            <person name="Kigawa T."/>
            <person name="Yokoyama S."/>
        </authorList>
    </citation>
    <scope>STRUCTURE BY NMR</scope>
</reference>
<evidence type="ECO:0000250" key="1">
    <source>
        <dbReference type="UniProtKB" id="Q9H3K6"/>
    </source>
</evidence>
<evidence type="ECO:0000303" key="2">
    <source>
    </source>
</evidence>
<evidence type="ECO:0000305" key="3"/>
<evidence type="ECO:0007829" key="4">
    <source>
        <dbReference type="PDB" id="1V9J"/>
    </source>
</evidence>
<comment type="function">
    <text evidence="1">Acts as a cytosolic iron-sulfur (Fe-S) cluster assembly factor that facilitates [2Fe-2S] cluster insertion into a subset of cytosolic proteins. Acts together with the monothiol glutaredoxin GLRX3.</text>
</comment>
<comment type="subunit">
    <text evidence="1">Interacts with GLRX3; forms a heterotrimeric complex composed by two BOLA2 molecules and one GLRX3 molecule; linked by [2Fe-2S] clusters.</text>
</comment>
<comment type="subcellular location">
    <subcellularLocation>
        <location evidence="1">Cytoplasm</location>
    </subcellularLocation>
    <subcellularLocation>
        <location evidence="1">Nucleus</location>
    </subcellularLocation>
</comment>
<comment type="alternative products">
    <event type="alternative splicing"/>
    <isoform>
        <id>Q8BGS2-1</id>
        <name>1</name>
        <sequence type="displayed"/>
    </isoform>
    <isoform>
        <id>Q8BGS2-2</id>
        <name>2</name>
        <sequence type="described" ref="VSP_010094"/>
    </isoform>
</comment>
<comment type="similarity">
    <text evidence="3">Belongs to the BolA/IbaG family.</text>
</comment>
<feature type="chain" id="PRO_0000201237" description="BolA-like protein 2">
    <location>
        <begin position="1"/>
        <end position="86"/>
    </location>
</feature>
<feature type="modified residue" description="N-acetylmethionine" evidence="1">
    <location>
        <position position="1"/>
    </location>
</feature>
<feature type="splice variant" id="VSP_010094" description="In isoform 2." evidence="2">
    <location>
        <begin position="55"/>
        <end position="86"/>
    </location>
</feature>
<feature type="strand" evidence="4">
    <location>
        <begin position="1"/>
        <end position="3"/>
    </location>
</feature>
<feature type="helix" evidence="4">
    <location>
        <begin position="5"/>
        <end position="16"/>
    </location>
</feature>
<feature type="strand" evidence="4">
    <location>
        <begin position="19"/>
        <end position="25"/>
    </location>
</feature>
<feature type="strand" evidence="4">
    <location>
        <begin position="28"/>
        <end position="31"/>
    </location>
</feature>
<feature type="strand" evidence="4">
    <location>
        <begin position="35"/>
        <end position="40"/>
    </location>
</feature>
<feature type="helix" evidence="4">
    <location>
        <begin position="43"/>
        <end position="46"/>
    </location>
</feature>
<feature type="helix" evidence="4">
    <location>
        <begin position="49"/>
        <end position="59"/>
    </location>
</feature>
<feature type="turn" evidence="4">
    <location>
        <begin position="60"/>
        <end position="63"/>
    </location>
</feature>
<feature type="helix" evidence="4">
    <location>
        <begin position="64"/>
        <end position="66"/>
    </location>
</feature>
<feature type="strand" evidence="4">
    <location>
        <begin position="68"/>
        <end position="75"/>
    </location>
</feature>
<feature type="helix" evidence="4">
    <location>
        <begin position="77"/>
        <end position="82"/>
    </location>
</feature>
<accession>Q8BGS2</accession>
<accession>Q0P601</accession>
<proteinExistence type="evidence at protein level"/>
<protein>
    <recommendedName>
        <fullName>BolA-like protein 2</fullName>
    </recommendedName>
</protein>
<keyword id="KW-0002">3D-structure</keyword>
<keyword id="KW-0007">Acetylation</keyword>
<keyword id="KW-0025">Alternative splicing</keyword>
<keyword id="KW-0963">Cytoplasm</keyword>
<keyword id="KW-0539">Nucleus</keyword>
<keyword id="KW-1185">Reference proteome</keyword>
<name>BOLA2_MOUSE</name>
<organism>
    <name type="scientific">Mus musculus</name>
    <name type="common">Mouse</name>
    <dbReference type="NCBI Taxonomy" id="10090"/>
    <lineage>
        <taxon>Eukaryota</taxon>
        <taxon>Metazoa</taxon>
        <taxon>Chordata</taxon>
        <taxon>Craniata</taxon>
        <taxon>Vertebrata</taxon>
        <taxon>Euteleostomi</taxon>
        <taxon>Mammalia</taxon>
        <taxon>Eutheria</taxon>
        <taxon>Euarchontoglires</taxon>
        <taxon>Glires</taxon>
        <taxon>Rodentia</taxon>
        <taxon>Myomorpha</taxon>
        <taxon>Muroidea</taxon>
        <taxon>Muridae</taxon>
        <taxon>Murinae</taxon>
        <taxon>Mus</taxon>
        <taxon>Mus</taxon>
    </lineage>
</organism>